<name>HTF_BLAGI</name>
<organism>
    <name type="scientific">Blaberus giganteus</name>
    <name type="common">Giant cockroach</name>
    <dbReference type="NCBI Taxonomy" id="36943"/>
    <lineage>
        <taxon>Eukaryota</taxon>
        <taxon>Metazoa</taxon>
        <taxon>Ecdysozoa</taxon>
        <taxon>Arthropoda</taxon>
        <taxon>Hexapoda</taxon>
        <taxon>Insecta</taxon>
        <taxon>Pterygota</taxon>
        <taxon>Neoptera</taxon>
        <taxon>Polyneoptera</taxon>
        <taxon>Dictyoptera</taxon>
        <taxon>Blattodea</taxon>
        <taxon>Blaberoidea</taxon>
        <taxon>Blaberidae</taxon>
        <taxon>Blaberinae</taxon>
        <taxon>Blaberus</taxon>
    </lineage>
</organism>
<evidence type="ECO:0000250" key="1">
    <source>
        <dbReference type="UniProtKB" id="P67790"/>
    </source>
</evidence>
<evidence type="ECO:0000255" key="2"/>
<evidence type="ECO:0000269" key="3">
    <source>
    </source>
</evidence>
<evidence type="ECO:0000303" key="4">
    <source>
    </source>
</evidence>
<evidence type="ECO:0000305" key="5"/>
<comment type="function">
    <text evidence="5">Hypertrehalosaemic factors are neuropeptides that elevate the level of trehalose in the hemolymph (trehalose is the major carbohydrate in the hemolymph of insects).</text>
</comment>
<comment type="subcellular location">
    <subcellularLocation>
        <location evidence="5">Secreted</location>
    </subcellularLocation>
</comment>
<comment type="similarity">
    <text evidence="2">Belongs to the AKH/HRTH/RPCH family.</text>
</comment>
<keyword id="KW-0027">Amidation</keyword>
<keyword id="KW-0903">Direct protein sequencing</keyword>
<keyword id="KW-0372">Hormone</keyword>
<keyword id="KW-0527">Neuropeptide</keyword>
<keyword id="KW-0873">Pyrrolidone carboxylic acid</keyword>
<keyword id="KW-0964">Secreted</keyword>
<sequence length="10" mass="1092">QVNFSPGWGT</sequence>
<feature type="peptide" id="PRO_0000378636" description="Hypertrehalosaemic factor" evidence="3">
    <location>
        <begin position="1"/>
        <end position="10"/>
    </location>
</feature>
<feature type="modified residue" description="Pyrrolidone carboxylic acid" evidence="3">
    <location>
        <position position="1"/>
    </location>
</feature>
<feature type="modified residue" description="Threonine amide" evidence="3">
    <location>
        <position position="10"/>
    </location>
</feature>
<proteinExistence type="evidence at protein level"/>
<reference evidence="5" key="1">
    <citation type="journal article" date="2009" name="BMC Evol. Biol.">
        <title>A proteomic approach for studying insect phylogeny: CAPA peptides of ancient insect taxa (Dictyoptera, Blattoptera) as a test case.</title>
        <authorList>
            <person name="Roth S."/>
            <person name="Fromm B."/>
            <person name="Gaede G."/>
            <person name="Predel R."/>
        </authorList>
    </citation>
    <scope>PROTEIN SEQUENCE</scope>
    <scope>PYROGLUTAMATE FORMATION AT GLN-1</scope>
    <scope>AMIDATION AT THR-10</scope>
    <source>
        <tissue evidence="3">Corpora cardiaca</tissue>
    </source>
</reference>
<dbReference type="GO" id="GO:0005576">
    <property type="term" value="C:extracellular region"/>
    <property type="evidence" value="ECO:0007669"/>
    <property type="project" value="UniProtKB-SubCell"/>
</dbReference>
<dbReference type="GO" id="GO:0005179">
    <property type="term" value="F:hormone activity"/>
    <property type="evidence" value="ECO:0007669"/>
    <property type="project" value="UniProtKB-KW"/>
</dbReference>
<dbReference type="GO" id="GO:0007218">
    <property type="term" value="P:neuropeptide signaling pathway"/>
    <property type="evidence" value="ECO:0007669"/>
    <property type="project" value="UniProtKB-KW"/>
</dbReference>
<dbReference type="InterPro" id="IPR002047">
    <property type="entry name" value="Adipokinetic_hormone_CS"/>
</dbReference>
<dbReference type="PROSITE" id="PS00256">
    <property type="entry name" value="AKH"/>
    <property type="match status" value="1"/>
</dbReference>
<protein>
    <recommendedName>
        <fullName evidence="1">Hypertrehalosaemic factor</fullName>
    </recommendedName>
    <alternativeName>
        <fullName evidence="4">Adipokinetic hormone 1</fullName>
        <shortName evidence="4">BlaGi-AKH-1</shortName>
    </alternativeName>
    <alternativeName>
        <fullName evidence="1">Hypertrehalosaemic neuropeptide</fullName>
    </alternativeName>
</protein>
<accession>P85557</accession>